<feature type="chain" id="PRO_0000160915" description="Chloroplast envelope quinone oxidoreductase homolog">
    <location>
        <begin position="1"/>
        <end position="329"/>
    </location>
</feature>
<feature type="binding site" evidence="7 14">
    <location>
        <position position="58"/>
    </location>
    <ligand>
        <name>substrate</name>
    </ligand>
</feature>
<feature type="strand" evidence="15">
    <location>
        <begin position="5"/>
        <end position="11"/>
    </location>
</feature>
<feature type="helix" evidence="15">
    <location>
        <begin position="18"/>
        <end position="20"/>
    </location>
</feature>
<feature type="strand" evidence="15">
    <location>
        <begin position="22"/>
        <end position="27"/>
    </location>
</feature>
<feature type="strand" evidence="15">
    <location>
        <begin position="35"/>
        <end position="44"/>
    </location>
</feature>
<feature type="helix" evidence="15">
    <location>
        <begin position="47"/>
        <end position="54"/>
    </location>
</feature>
<feature type="turn" evidence="15">
    <location>
        <begin position="55"/>
        <end position="60"/>
    </location>
</feature>
<feature type="strand" evidence="15">
    <location>
        <begin position="61"/>
        <end position="67"/>
    </location>
</feature>
<feature type="strand" evidence="15">
    <location>
        <begin position="72"/>
        <end position="80"/>
    </location>
</feature>
<feature type="strand" evidence="15">
    <location>
        <begin position="92"/>
        <end position="96"/>
    </location>
</feature>
<feature type="helix" evidence="15">
    <location>
        <begin position="98"/>
        <end position="100"/>
    </location>
</feature>
<feature type="strand" evidence="15">
    <location>
        <begin position="105"/>
        <end position="112"/>
    </location>
</feature>
<feature type="helix" evidence="15">
    <location>
        <begin position="113"/>
        <end position="115"/>
    </location>
</feature>
<feature type="strand" evidence="15">
    <location>
        <begin position="116"/>
        <end position="118"/>
    </location>
</feature>
<feature type="helix" evidence="15">
    <location>
        <begin position="125"/>
        <end position="129"/>
    </location>
</feature>
<feature type="helix" evidence="15">
    <location>
        <begin position="132"/>
        <end position="143"/>
    </location>
</feature>
<feature type="strand" evidence="15">
    <location>
        <begin position="150"/>
        <end position="152"/>
    </location>
</feature>
<feature type="strand" evidence="15">
    <location>
        <begin position="158"/>
        <end position="163"/>
    </location>
</feature>
<feature type="helix" evidence="15">
    <location>
        <begin position="167"/>
        <end position="178"/>
    </location>
</feature>
<feature type="strand" evidence="15">
    <location>
        <begin position="182"/>
        <end position="187"/>
    </location>
</feature>
<feature type="helix" evidence="15">
    <location>
        <begin position="189"/>
        <end position="191"/>
    </location>
</feature>
<feature type="helix" evidence="15">
    <location>
        <begin position="192"/>
        <end position="197"/>
    </location>
</feature>
<feature type="strand" evidence="15">
    <location>
        <begin position="201"/>
        <end position="205"/>
    </location>
</feature>
<feature type="helix" evidence="15">
    <location>
        <begin position="209"/>
        <end position="213"/>
    </location>
</feature>
<feature type="strand" evidence="15">
    <location>
        <begin position="222"/>
        <end position="227"/>
    </location>
</feature>
<feature type="helix" evidence="15">
    <location>
        <begin position="234"/>
        <end position="237"/>
    </location>
</feature>
<feature type="helix" evidence="15">
    <location>
        <begin position="238"/>
        <end position="240"/>
    </location>
</feature>
<feature type="strand" evidence="15">
    <location>
        <begin position="241"/>
        <end position="251"/>
    </location>
</feature>
<feature type="helix" evidence="15">
    <location>
        <begin position="254"/>
        <end position="266"/>
    </location>
</feature>
<feature type="strand" evidence="15">
    <location>
        <begin position="269"/>
        <end position="275"/>
    </location>
</feature>
<feature type="helix" evidence="15">
    <location>
        <begin position="281"/>
        <end position="292"/>
    </location>
</feature>
<feature type="strand" evidence="15">
    <location>
        <begin position="300"/>
        <end position="305"/>
    </location>
</feature>
<feature type="helix" evidence="15">
    <location>
        <begin position="306"/>
        <end position="308"/>
    </location>
</feature>
<feature type="helix" evidence="15">
    <location>
        <begin position="309"/>
        <end position="318"/>
    </location>
</feature>
<feature type="strand" evidence="15">
    <location>
        <begin position="322"/>
        <end position="328"/>
    </location>
</feature>
<keyword id="KW-0002">3D-structure</keyword>
<keyword id="KW-0150">Chloroplast</keyword>
<keyword id="KW-0472">Membrane</keyword>
<keyword id="KW-0520">NAD</keyword>
<keyword id="KW-0560">Oxidoreductase</keyword>
<keyword id="KW-0934">Plastid</keyword>
<keyword id="KW-1001">Plastid inner membrane</keyword>
<keyword id="KW-1185">Reference proteome</keyword>
<protein>
    <recommendedName>
        <fullName evidence="8">Chloroplast envelope quinone oxidoreductase homolog</fullName>
        <shortName evidence="8">ceQORH</shortName>
        <ecNumber evidence="6">1.3.1.-</ecNumber>
    </recommendedName>
</protein>
<evidence type="ECO:0000269" key="1">
    <source>
    </source>
</evidence>
<evidence type="ECO:0000269" key="2">
    <source>
    </source>
</evidence>
<evidence type="ECO:0000269" key="3">
    <source>
    </source>
</evidence>
<evidence type="ECO:0000269" key="4">
    <source>
    </source>
</evidence>
<evidence type="ECO:0000269" key="5">
    <source>
    </source>
</evidence>
<evidence type="ECO:0000269" key="6">
    <source>
    </source>
</evidence>
<evidence type="ECO:0000269" key="7">
    <source ref="10"/>
</evidence>
<evidence type="ECO:0000303" key="8">
    <source>
    </source>
</evidence>
<evidence type="ECO:0000305" key="9"/>
<evidence type="ECO:0000312" key="10">
    <source>
        <dbReference type="Araport" id="AT4G13010"/>
    </source>
</evidence>
<evidence type="ECO:0000312" key="11">
    <source>
        <dbReference type="EMBL" id="CAB45500.1"/>
    </source>
</evidence>
<evidence type="ECO:0007744" key="12">
    <source>
        <dbReference type="PDB" id="5A3J"/>
    </source>
</evidence>
<evidence type="ECO:0007744" key="13">
    <source>
        <dbReference type="PDB" id="5A3V"/>
    </source>
</evidence>
<evidence type="ECO:0007744" key="14">
    <source>
        <dbReference type="PDB" id="5A4D"/>
    </source>
</evidence>
<evidence type="ECO:0007829" key="15">
    <source>
        <dbReference type="PDB" id="5A3V"/>
    </source>
</evidence>
<gene>
    <name evidence="8" type="primary">CEQORH</name>
    <name evidence="10" type="ordered locus">At4g13010</name>
    <name evidence="11" type="ORF">F25G13_100</name>
</gene>
<name>QORH_ARATH</name>
<sequence length="329" mass="34436">MAGKLMHALQYNSYGGGAAGLEHVQVPVPTPKSNEVCLKLEATSLNPVDWKIQKGMIRPFLPRKFPCIPATDVAGEVVEVGSGVKNFKAGDKVVAVLSHLGGGGLAEFAVATEKLTVKRPQEVGAAEAAALPVAGLTALQALTNPAGLKLDGTGKKANILVTAASGGVGHYAVQLAKLANAHVTATCGARNIEFVKSLGADEVLDYKTPEGAALKSPSGKKYDAVVHCANGIPFSVFEPNLSENGKVIDITPGPNAMWTYAVKKITMSKKQLVPLLLIPKAENLEFMVNLVKEGKVKTVIDSKHPLSKAEDAWAKSIDGHATGKIIVEP</sequence>
<accession>Q9SV68</accession>
<proteinExistence type="evidence at protein level"/>
<comment type="function">
    <text evidence="6">NADPH-dependent alpha,beta-unsaturated oxoene reductase reducing the double bond of medium-chain (C9) to long-chain (C18) reactive electrophile species deriving from poly-unsaturated fatty acid peroxides. The best substrates are 13-lipoxygenase-derived gamma-ketols, but is unable to reduce the double bond of short-chain alkenals and alkenones such as acrolein, crotonaldehyde, 3-buten-2-one, 4-hexen-3-one and trans-2-hexenal, or quinones such as duroquinone, decylubiquinone, coenzyme Q0, menadione, menaquinone and phylloquinone. Can use trans-2-nonenal, trans-3-decen-2-one, 4-hydroxynonenal, 12-oxo-10(E) dodecanoate (traumatin), 4-oxononenal, trans-1,3 diphenyl-2-propenone, trans-1,4-diphenyl-2-butene-1,4-dione, 9-oxo-12,13-epoxy-(10E)-octadecenoic acid (trans-EKODE-1b), 9-hydroxy-12-oxo-10(E)-octadecenoic acid, 9-Hydroxy-12-oxo-10(E),15(Z)-octadecadienoic acid and 9,13-dihydroxy-10-oxo-11-octadecenoic acid as substrates, but has no activity with 13(R,S)-hydroperoxy-9(Z),11(E)-octadecadienoic acid (13-HPOD), 9(S),12(S),13(S)-trihydroxy-10(E)-octadecenoic acid, 13-hydroxy-12-oxo-9(Z)-octadecenoic acid, 9-oxo-10(E),12(Z)-octadecadienoic acid (9-KODE), 13-oxo-9(Z),11(E)-octadecadienoic acid (13-KODE) and 12-oxo-10,15(Z)-phytodienoic acid (12-OPDA).</text>
</comment>
<comment type="biophysicochemical properties">
    <kinetics>
        <KM evidence="6">200 uM for 4-oxo-nonenal</KM>
        <KM evidence="6">9 uM for trans-1,4-diphenyl-2-butene-1,4-dione</KM>
        <KM evidence="6">14 uM for 9-hydroxy-12-oxo-10(E)-octadecenoic acid</KM>
        <KM evidence="6">10 uM for 9-Hydroxy-12-oxo-10(E),15(Z)-octadecadienoic acid</KM>
        <text evidence="6">kcat is 14 sec(-1) for 4-oxo-nonenal. kcat is 4.5 sec(-1) for trans-1,4-diphenyl-2-butene-1,4-dione. kcat is 6 sec(-1) for 9-hydroxy-12-oxo-10(E)-octadecenoic acid. kcat is 3 sec(-1) for 9-Hydroxy-12-oxo-10(E),15(Z)-octadecadienoic acid.</text>
    </kinetics>
</comment>
<comment type="subunit">
    <text evidence="3 4 5">Homodimer or homotetramer (PubMed:25849509). Transition to monomer upon NADPH binding (PubMed:25849509). Interacts with calmodulin (PubMed:23549413). Interacts with HP30-1, HP30-2 and HP20 (PubMed:24248378).</text>
</comment>
<comment type="subcellular location">
    <subcellularLocation>
        <location evidence="1 2 4">Plastid</location>
        <location evidence="1 2 4">Chloroplast inner membrane</location>
    </subcellularLocation>
    <text evidence="2 4">Faces the stroma side of the membrane (PubMed:20424175). Targeting to the chloroplast inner membrane is mediated by HP30-1, HP30-2 and HP20 (PubMed:24248378).</text>
</comment>
<comment type="induction">
    <text evidence="2">Not regulated by 2,6-dimethoxy-p-benzoquinone (DMBQ).</text>
</comment>
<comment type="domain">
    <text evidence="1">A nonterminal hydrophilic domain (59-100) is essential for targeting to the chloroplast. The C-terminal part (101-329) is necessary and sufficient to select for the import site.</text>
</comment>
<comment type="miscellaneous">
    <text evidence="1">The trimeric TOC159/75/34 complex is not involved in chloroplast import of CEQORH.</text>
</comment>
<comment type="similarity">
    <text evidence="9">Belongs to the zinc-containing alcohol dehydrogenase family. Quinone oxidoreductase subfamily.</text>
</comment>
<dbReference type="EC" id="1.3.1.-" evidence="6"/>
<dbReference type="EMBL" id="AL079349">
    <property type="protein sequence ID" value="CAB45500.1"/>
    <property type="molecule type" value="Genomic_DNA"/>
</dbReference>
<dbReference type="EMBL" id="AL161535">
    <property type="protein sequence ID" value="CAB78343.1"/>
    <property type="molecule type" value="Genomic_DNA"/>
</dbReference>
<dbReference type="EMBL" id="CP002687">
    <property type="protein sequence ID" value="AEE83213.1"/>
    <property type="molecule type" value="Genomic_DNA"/>
</dbReference>
<dbReference type="EMBL" id="AY045857">
    <property type="protein sequence ID" value="AAK76531.1"/>
    <property type="molecule type" value="mRNA"/>
</dbReference>
<dbReference type="EMBL" id="AF412068">
    <property type="protein sequence ID" value="AAL06521.1"/>
    <property type="molecule type" value="mRNA"/>
</dbReference>
<dbReference type="EMBL" id="AY117154">
    <property type="protein sequence ID" value="AAM51229.1"/>
    <property type="molecule type" value="mRNA"/>
</dbReference>
<dbReference type="EMBL" id="AY056396">
    <property type="protein sequence ID" value="AAL08252.1"/>
    <property type="molecule type" value="mRNA"/>
</dbReference>
<dbReference type="PIR" id="T10203">
    <property type="entry name" value="T10203"/>
</dbReference>
<dbReference type="RefSeq" id="NP_193037.1">
    <property type="nucleotide sequence ID" value="NM_117370.3"/>
</dbReference>
<dbReference type="PDB" id="5A3J">
    <property type="method" value="X-ray"/>
    <property type="resolution" value="2.78 A"/>
    <property type="chains" value="A/B/C/D/E/F/G/H/I/J/K/L=1-329"/>
</dbReference>
<dbReference type="PDB" id="5A3V">
    <property type="method" value="X-ray"/>
    <property type="resolution" value="2.34 A"/>
    <property type="chains" value="A/B=1-329"/>
</dbReference>
<dbReference type="PDB" id="5A4D">
    <property type="method" value="X-ray"/>
    <property type="resolution" value="2.81 A"/>
    <property type="chains" value="A/B/C/D/E/F/G/H=1-329"/>
</dbReference>
<dbReference type="PDBsum" id="5A3J"/>
<dbReference type="PDBsum" id="5A3V"/>
<dbReference type="PDBsum" id="5A4D"/>
<dbReference type="SMR" id="Q9SV68"/>
<dbReference type="FunCoup" id="Q9SV68">
    <property type="interactions" value="234"/>
</dbReference>
<dbReference type="STRING" id="3702.Q9SV68"/>
<dbReference type="GlyGen" id="Q9SV68">
    <property type="glycosylation" value="1 site"/>
</dbReference>
<dbReference type="PaxDb" id="3702-AT4G13010.1"/>
<dbReference type="ProteomicsDB" id="236602"/>
<dbReference type="EnsemblPlants" id="AT4G13010.1">
    <property type="protein sequence ID" value="AT4G13010.1"/>
    <property type="gene ID" value="AT4G13010"/>
</dbReference>
<dbReference type="GeneID" id="826914"/>
<dbReference type="Gramene" id="AT4G13010.1">
    <property type="protein sequence ID" value="AT4G13010.1"/>
    <property type="gene ID" value="AT4G13010"/>
</dbReference>
<dbReference type="KEGG" id="ath:AT4G13010"/>
<dbReference type="Araport" id="AT4G13010"/>
<dbReference type="TAIR" id="AT4G13010">
    <property type="gene designation" value="CEQORH"/>
</dbReference>
<dbReference type="eggNOG" id="KOG1198">
    <property type="taxonomic scope" value="Eukaryota"/>
</dbReference>
<dbReference type="HOGENOM" id="CLU_026673_3_3_1"/>
<dbReference type="InParanoid" id="Q9SV68"/>
<dbReference type="OMA" id="CANELNW"/>
<dbReference type="PhylomeDB" id="Q9SV68"/>
<dbReference type="PRO" id="PR:Q9SV68"/>
<dbReference type="Proteomes" id="UP000006548">
    <property type="component" value="Chromosome 4"/>
</dbReference>
<dbReference type="ExpressionAtlas" id="Q9SV68">
    <property type="expression patterns" value="baseline and differential"/>
</dbReference>
<dbReference type="GO" id="GO:0009507">
    <property type="term" value="C:chloroplast"/>
    <property type="evidence" value="ECO:0007005"/>
    <property type="project" value="TAIR"/>
</dbReference>
<dbReference type="GO" id="GO:0009941">
    <property type="term" value="C:chloroplast envelope"/>
    <property type="evidence" value="ECO:0007005"/>
    <property type="project" value="TAIR"/>
</dbReference>
<dbReference type="GO" id="GO:0009706">
    <property type="term" value="C:chloroplast inner membrane"/>
    <property type="evidence" value="ECO:0007669"/>
    <property type="project" value="UniProtKB-SubCell"/>
</dbReference>
<dbReference type="GO" id="GO:0009535">
    <property type="term" value="C:chloroplast thylakoid membrane"/>
    <property type="evidence" value="ECO:0007005"/>
    <property type="project" value="TAIR"/>
</dbReference>
<dbReference type="GO" id="GO:0005829">
    <property type="term" value="C:cytosol"/>
    <property type="evidence" value="ECO:0007005"/>
    <property type="project" value="TAIR"/>
</dbReference>
<dbReference type="GO" id="GO:0000325">
    <property type="term" value="C:plant-type vacuole"/>
    <property type="evidence" value="ECO:0007005"/>
    <property type="project" value="TAIR"/>
</dbReference>
<dbReference type="GO" id="GO:0005886">
    <property type="term" value="C:plasma membrane"/>
    <property type="evidence" value="ECO:0007005"/>
    <property type="project" value="TAIR"/>
</dbReference>
<dbReference type="GO" id="GO:0016491">
    <property type="term" value="F:oxidoreductase activity"/>
    <property type="evidence" value="ECO:0007669"/>
    <property type="project" value="UniProtKB-KW"/>
</dbReference>
<dbReference type="CDD" id="cd08267">
    <property type="entry name" value="MDR1"/>
    <property type="match status" value="1"/>
</dbReference>
<dbReference type="Gene3D" id="3.90.180.10">
    <property type="entry name" value="Medium-chain alcohol dehydrogenases, catalytic domain"/>
    <property type="match status" value="1"/>
</dbReference>
<dbReference type="Gene3D" id="3.40.50.720">
    <property type="entry name" value="NAD(P)-binding Rossmann-like Domain"/>
    <property type="match status" value="1"/>
</dbReference>
<dbReference type="InterPro" id="IPR013154">
    <property type="entry name" value="ADH-like_N"/>
</dbReference>
<dbReference type="InterPro" id="IPR052733">
    <property type="entry name" value="Chloroplast_QOR"/>
</dbReference>
<dbReference type="InterPro" id="IPR011032">
    <property type="entry name" value="GroES-like_sf"/>
</dbReference>
<dbReference type="InterPro" id="IPR036291">
    <property type="entry name" value="NAD(P)-bd_dom_sf"/>
</dbReference>
<dbReference type="InterPro" id="IPR020843">
    <property type="entry name" value="PKS_ER"/>
</dbReference>
<dbReference type="PANTHER" id="PTHR44013">
    <property type="entry name" value="ZINC-TYPE ALCOHOL DEHYDROGENASE-LIKE PROTEIN C16A3.02C"/>
    <property type="match status" value="1"/>
</dbReference>
<dbReference type="PANTHER" id="PTHR44013:SF1">
    <property type="entry name" value="ZINC-TYPE ALCOHOL DEHYDROGENASE-LIKE PROTEIN C16A3.02C"/>
    <property type="match status" value="1"/>
</dbReference>
<dbReference type="Pfam" id="PF08240">
    <property type="entry name" value="ADH_N"/>
    <property type="match status" value="1"/>
</dbReference>
<dbReference type="Pfam" id="PF13602">
    <property type="entry name" value="ADH_zinc_N_2"/>
    <property type="match status" value="1"/>
</dbReference>
<dbReference type="SMART" id="SM00829">
    <property type="entry name" value="PKS_ER"/>
    <property type="match status" value="1"/>
</dbReference>
<dbReference type="SUPFAM" id="SSF50129">
    <property type="entry name" value="GroES-like"/>
    <property type="match status" value="1"/>
</dbReference>
<dbReference type="SUPFAM" id="SSF51735">
    <property type="entry name" value="NAD(P)-binding Rossmann-fold domains"/>
    <property type="match status" value="1"/>
</dbReference>
<reference key="1">
    <citation type="journal article" date="1999" name="Nature">
        <title>Sequence and analysis of chromosome 4 of the plant Arabidopsis thaliana.</title>
        <authorList>
            <person name="Mayer K.F.X."/>
            <person name="Schueller C."/>
            <person name="Wambutt R."/>
            <person name="Murphy G."/>
            <person name="Volckaert G."/>
            <person name="Pohl T."/>
            <person name="Duesterhoeft A."/>
            <person name="Stiekema W."/>
            <person name="Entian K.-D."/>
            <person name="Terryn N."/>
            <person name="Harris B."/>
            <person name="Ansorge W."/>
            <person name="Brandt P."/>
            <person name="Grivell L.A."/>
            <person name="Rieger M."/>
            <person name="Weichselgartner M."/>
            <person name="de Simone V."/>
            <person name="Obermaier B."/>
            <person name="Mache R."/>
            <person name="Mueller M."/>
            <person name="Kreis M."/>
            <person name="Delseny M."/>
            <person name="Puigdomenech P."/>
            <person name="Watson M."/>
            <person name="Schmidtheini T."/>
            <person name="Reichert B."/>
            <person name="Portetelle D."/>
            <person name="Perez-Alonso M."/>
            <person name="Boutry M."/>
            <person name="Bancroft I."/>
            <person name="Vos P."/>
            <person name="Hoheisel J."/>
            <person name="Zimmermann W."/>
            <person name="Wedler H."/>
            <person name="Ridley P."/>
            <person name="Langham S.-A."/>
            <person name="McCullagh B."/>
            <person name="Bilham L."/>
            <person name="Robben J."/>
            <person name="van der Schueren J."/>
            <person name="Grymonprez B."/>
            <person name="Chuang Y.-J."/>
            <person name="Vandenbussche F."/>
            <person name="Braeken M."/>
            <person name="Weltjens I."/>
            <person name="Voet M."/>
            <person name="Bastiaens I."/>
            <person name="Aert R."/>
            <person name="Defoor E."/>
            <person name="Weitzenegger T."/>
            <person name="Bothe G."/>
            <person name="Ramsperger U."/>
            <person name="Hilbert H."/>
            <person name="Braun M."/>
            <person name="Holzer E."/>
            <person name="Brandt A."/>
            <person name="Peters S."/>
            <person name="van Staveren M."/>
            <person name="Dirkse W."/>
            <person name="Mooijman P."/>
            <person name="Klein Lankhorst R."/>
            <person name="Rose M."/>
            <person name="Hauf J."/>
            <person name="Koetter P."/>
            <person name="Berneiser S."/>
            <person name="Hempel S."/>
            <person name="Feldpausch M."/>
            <person name="Lamberth S."/>
            <person name="Van den Daele H."/>
            <person name="De Keyser A."/>
            <person name="Buysshaert C."/>
            <person name="Gielen J."/>
            <person name="Villarroel R."/>
            <person name="De Clercq R."/>
            <person name="van Montagu M."/>
            <person name="Rogers J."/>
            <person name="Cronin A."/>
            <person name="Quail M.A."/>
            <person name="Bray-Allen S."/>
            <person name="Clark L."/>
            <person name="Doggett J."/>
            <person name="Hall S."/>
            <person name="Kay M."/>
            <person name="Lennard N."/>
            <person name="McLay K."/>
            <person name="Mayes R."/>
            <person name="Pettett A."/>
            <person name="Rajandream M.A."/>
            <person name="Lyne M."/>
            <person name="Benes V."/>
            <person name="Rechmann S."/>
            <person name="Borkova D."/>
            <person name="Bloecker H."/>
            <person name="Scharfe M."/>
            <person name="Grimm M."/>
            <person name="Loehnert T.-H."/>
            <person name="Dose S."/>
            <person name="de Haan M."/>
            <person name="Maarse A.C."/>
            <person name="Schaefer M."/>
            <person name="Mueller-Auer S."/>
            <person name="Gabel C."/>
            <person name="Fuchs M."/>
            <person name="Fartmann B."/>
            <person name="Granderath K."/>
            <person name="Dauner D."/>
            <person name="Herzl A."/>
            <person name="Neumann S."/>
            <person name="Argiriou A."/>
            <person name="Vitale D."/>
            <person name="Liguori R."/>
            <person name="Piravandi E."/>
            <person name="Massenet O."/>
            <person name="Quigley F."/>
            <person name="Clabauld G."/>
            <person name="Muendlein A."/>
            <person name="Felber R."/>
            <person name="Schnabl S."/>
            <person name="Hiller R."/>
            <person name="Schmidt W."/>
            <person name="Lecharny A."/>
            <person name="Aubourg S."/>
            <person name="Chefdor F."/>
            <person name="Cooke R."/>
            <person name="Berger C."/>
            <person name="Monfort A."/>
            <person name="Casacuberta E."/>
            <person name="Gibbons T."/>
            <person name="Weber N."/>
            <person name="Vandenbol M."/>
            <person name="Bargues M."/>
            <person name="Terol J."/>
            <person name="Torres A."/>
            <person name="Perez-Perez A."/>
            <person name="Purnelle B."/>
            <person name="Bent E."/>
            <person name="Johnson S."/>
            <person name="Tacon D."/>
            <person name="Jesse T."/>
            <person name="Heijnen L."/>
            <person name="Schwarz S."/>
            <person name="Scholler P."/>
            <person name="Heber S."/>
            <person name="Francs P."/>
            <person name="Bielke C."/>
            <person name="Frishman D."/>
            <person name="Haase D."/>
            <person name="Lemcke K."/>
            <person name="Mewes H.-W."/>
            <person name="Stocker S."/>
            <person name="Zaccaria P."/>
            <person name="Bevan M."/>
            <person name="Wilson R.K."/>
            <person name="de la Bastide M."/>
            <person name="Habermann K."/>
            <person name="Parnell L."/>
            <person name="Dedhia N."/>
            <person name="Gnoj L."/>
            <person name="Schutz K."/>
            <person name="Huang E."/>
            <person name="Spiegel L."/>
            <person name="Sekhon M."/>
            <person name="Murray J."/>
            <person name="Sheet P."/>
            <person name="Cordes M."/>
            <person name="Abu-Threideh J."/>
            <person name="Stoneking T."/>
            <person name="Kalicki J."/>
            <person name="Graves T."/>
            <person name="Harmon G."/>
            <person name="Edwards J."/>
            <person name="Latreille P."/>
            <person name="Courtney L."/>
            <person name="Cloud J."/>
            <person name="Abbott A."/>
            <person name="Scott K."/>
            <person name="Johnson D."/>
            <person name="Minx P."/>
            <person name="Bentley D."/>
            <person name="Fulton B."/>
            <person name="Miller N."/>
            <person name="Greco T."/>
            <person name="Kemp K."/>
            <person name="Kramer J."/>
            <person name="Fulton L."/>
            <person name="Mardis E."/>
            <person name="Dante M."/>
            <person name="Pepin K."/>
            <person name="Hillier L.W."/>
            <person name="Nelson J."/>
            <person name="Spieth J."/>
            <person name="Ryan E."/>
            <person name="Andrews S."/>
            <person name="Geisel C."/>
            <person name="Layman D."/>
            <person name="Du H."/>
            <person name="Ali J."/>
            <person name="Berghoff A."/>
            <person name="Jones K."/>
            <person name="Drone K."/>
            <person name="Cotton M."/>
            <person name="Joshu C."/>
            <person name="Antonoiu B."/>
            <person name="Zidanic M."/>
            <person name="Strong C."/>
            <person name="Sun H."/>
            <person name="Lamar B."/>
            <person name="Yordan C."/>
            <person name="Ma P."/>
            <person name="Zhong J."/>
            <person name="Preston R."/>
            <person name="Vil D."/>
            <person name="Shekher M."/>
            <person name="Matero A."/>
            <person name="Shah R."/>
            <person name="Swaby I.K."/>
            <person name="O'Shaughnessy A."/>
            <person name="Rodriguez M."/>
            <person name="Hoffman J."/>
            <person name="Till S."/>
            <person name="Granat S."/>
            <person name="Shohdy N."/>
            <person name="Hasegawa A."/>
            <person name="Hameed A."/>
            <person name="Lodhi M."/>
            <person name="Johnson A."/>
            <person name="Chen E."/>
            <person name="Marra M.A."/>
            <person name="Martienssen R."/>
            <person name="McCombie W.R."/>
        </authorList>
    </citation>
    <scope>NUCLEOTIDE SEQUENCE [LARGE SCALE GENOMIC DNA]</scope>
    <source>
        <strain>cv. Columbia</strain>
    </source>
</reference>
<reference key="2">
    <citation type="journal article" date="2017" name="Plant J.">
        <title>Araport11: a complete reannotation of the Arabidopsis thaliana reference genome.</title>
        <authorList>
            <person name="Cheng C.Y."/>
            <person name="Krishnakumar V."/>
            <person name="Chan A.P."/>
            <person name="Thibaud-Nissen F."/>
            <person name="Schobel S."/>
            <person name="Town C.D."/>
        </authorList>
    </citation>
    <scope>GENOME REANNOTATION</scope>
    <source>
        <strain>cv. Columbia</strain>
    </source>
</reference>
<reference key="3">
    <citation type="journal article" date="2003" name="Science">
        <title>Empirical analysis of transcriptional activity in the Arabidopsis genome.</title>
        <authorList>
            <person name="Yamada K."/>
            <person name="Lim J."/>
            <person name="Dale J.M."/>
            <person name="Chen H."/>
            <person name="Shinn P."/>
            <person name="Palm C.J."/>
            <person name="Southwick A.M."/>
            <person name="Wu H.C."/>
            <person name="Kim C.J."/>
            <person name="Nguyen M."/>
            <person name="Pham P.K."/>
            <person name="Cheuk R.F."/>
            <person name="Karlin-Newmann G."/>
            <person name="Liu S.X."/>
            <person name="Lam B."/>
            <person name="Sakano H."/>
            <person name="Wu T."/>
            <person name="Yu G."/>
            <person name="Miranda M."/>
            <person name="Quach H.L."/>
            <person name="Tripp M."/>
            <person name="Chang C.H."/>
            <person name="Lee J.M."/>
            <person name="Toriumi M.J."/>
            <person name="Chan M.M."/>
            <person name="Tang C.C."/>
            <person name="Onodera C.S."/>
            <person name="Deng J.M."/>
            <person name="Akiyama K."/>
            <person name="Ansari Y."/>
            <person name="Arakawa T."/>
            <person name="Banh J."/>
            <person name="Banno F."/>
            <person name="Bowser L."/>
            <person name="Brooks S.Y."/>
            <person name="Carninci P."/>
            <person name="Chao Q."/>
            <person name="Choy N."/>
            <person name="Enju A."/>
            <person name="Goldsmith A.D."/>
            <person name="Gurjal M."/>
            <person name="Hansen N.F."/>
            <person name="Hayashizaki Y."/>
            <person name="Johnson-Hopson C."/>
            <person name="Hsuan V.W."/>
            <person name="Iida K."/>
            <person name="Karnes M."/>
            <person name="Khan S."/>
            <person name="Koesema E."/>
            <person name="Ishida J."/>
            <person name="Jiang P.X."/>
            <person name="Jones T."/>
            <person name="Kawai J."/>
            <person name="Kamiya A."/>
            <person name="Meyers C."/>
            <person name="Nakajima M."/>
            <person name="Narusaka M."/>
            <person name="Seki M."/>
            <person name="Sakurai T."/>
            <person name="Satou M."/>
            <person name="Tamse R."/>
            <person name="Vaysberg M."/>
            <person name="Wallender E.K."/>
            <person name="Wong C."/>
            <person name="Yamamura Y."/>
            <person name="Yuan S."/>
            <person name="Shinozaki K."/>
            <person name="Davis R.W."/>
            <person name="Theologis A."/>
            <person name="Ecker J.R."/>
        </authorList>
    </citation>
    <scope>NUCLEOTIDE SEQUENCE [LARGE SCALE MRNA]</scope>
    <source>
        <strain>cv. Columbia</strain>
    </source>
</reference>
<reference key="4">
    <citation type="journal article" date="2007" name="J. Biol. Chem.">
        <title>Toc159- and Toc75-independent import of a transit sequence-less precursor into the inner envelope of chloroplasts.</title>
        <authorList>
            <person name="Miras S."/>
            <person name="Salvi D."/>
            <person name="Piette L."/>
            <person name="Seigneurin-Berny D."/>
            <person name="Grunwald D."/>
            <person name="Reinbothe C."/>
            <person name="Joyard J."/>
            <person name="Reinbothe S."/>
            <person name="Rolland N."/>
        </authorList>
    </citation>
    <scope>SUBCELLULAR LOCATION</scope>
    <scope>DOMAIN</scope>
</reference>
<reference key="5">
    <citation type="journal article" date="2010" name="Plant Cell">
        <title>A single-electron reducing quinone oxidoreductase is necessary to induce haustorium development in the root parasitic plant Triphysaria.</title>
        <authorList>
            <person name="Bandaranayake P.C."/>
            <person name="Filappova T."/>
            <person name="Tomilov A."/>
            <person name="Tomilova N.B."/>
            <person name="Jamison-McClung D."/>
            <person name="Ngo Q."/>
            <person name="Inoue K."/>
            <person name="Yoder J.I."/>
        </authorList>
    </citation>
    <scope>LACK OF INDUCTION</scope>
    <scope>SUBCELLULAR LOCATION</scope>
</reference>
<reference key="6">
    <citation type="journal article" date="2013" name="Mol. Biosyst.">
        <title>Complementary biochemical approaches applied to the identification of plastidial calmodulin-binding proteins.</title>
        <authorList>
            <person name="Dell'Aglio E."/>
            <person name="Giustini C."/>
            <person name="Salvi D."/>
            <person name="Brugiere S."/>
            <person name="Delpierre F."/>
            <person name="Moyet L."/>
            <person name="Baudet M."/>
            <person name="Seigneurin-Berny D."/>
            <person name="Matringe M."/>
            <person name="Ferro M."/>
            <person name="Rolland N."/>
            <person name="Curien G."/>
        </authorList>
    </citation>
    <scope>INTERACTION WITH CALMODULIN</scope>
</reference>
<reference key="7">
    <citation type="journal article" date="2013" name="Proc. Natl. Acad. Sci. U.S.A.">
        <title>Three proteins mediate import of transit sequence-less precursors into the inner envelope of chloroplasts in Arabidopsis thaliana.</title>
        <authorList>
            <person name="Rossig C."/>
            <person name="Reinbothe C."/>
            <person name="Gray J."/>
            <person name="Valdes O."/>
            <person name="von Wettstein D."/>
            <person name="Reinbothe S."/>
        </authorList>
    </citation>
    <scope>INTERACTION WITH HP30-1; HP30-2 AND HP20</scope>
    <scope>SUBCELLULAR LOCATION</scope>
    <source>
        <strain>cv. Columbia</strain>
    </source>
</reference>
<reference key="8">
    <citation type="journal article" date="2015" name="Acta Crystallogr. F Struct. Biol. Commun.">
        <title>Analytical ultracentrifugation and preliminary X-ray studies of the chloroplast envelope quinone oxidoreductase homologue from Arabidopsis thaliana.</title>
        <authorList>
            <person name="Mas y mas S."/>
            <person name="Giustini C."/>
            <person name="Ferrer J.L."/>
            <person name="Rolland N."/>
            <person name="Curien G."/>
            <person name="Cobessi D."/>
        </authorList>
    </citation>
    <scope>CRYSTALLIZATION</scope>
    <scope>SUBUNIT</scope>
</reference>
<reference key="9">
    <citation type="journal article" date="2016" name="Phytochemistry">
        <title>The chloroplast membrane associated ceQORH putative quinone oxidoreductase reduces long-chain, stress-related oxidized lipids.</title>
        <authorList>
            <person name="Curien G."/>
            <person name="Giustini C."/>
            <person name="Montillet J.L."/>
            <person name="Mas-Y-Mas S."/>
            <person name="Cobessi D."/>
            <person name="Ferrer J.L."/>
            <person name="Matringe M."/>
            <person name="Grechkin A."/>
            <person name="Rolland N."/>
        </authorList>
    </citation>
    <scope>FUNCTION</scope>
    <scope>CATALYTIC ACTIVITY</scope>
    <scope>SUBSTRATE SPECIFICITY</scope>
    <scope>BIOPHYSICOCHEMICAL PROPERTIES</scope>
</reference>
<reference evidence="12 13 14" key="10">
    <citation type="submission" date="2015-06" db="PDB data bank">
        <title>Crystal structure of the chloroplastic gamma-ketol reductase from Arabidopsis thaliana.</title>
        <authorList>
            <person name="Mas-Y-Mas S."/>
            <person name="Curien G."/>
            <person name="Giustini C."/>
            <person name="Rolland N."/>
            <person name="Ferrer J.L."/>
            <person name="Cobessi D."/>
        </authorList>
    </citation>
    <scope>X-RAY CRYSTALLOGRAPHY (2.34 ANGSTROMS) IN COMPLEX WITH 13-OXO-9(Z),11(E),15(Z)-OCTADECATRIENOIC ACID</scope>
</reference>
<organism>
    <name type="scientific">Arabidopsis thaliana</name>
    <name type="common">Mouse-ear cress</name>
    <dbReference type="NCBI Taxonomy" id="3702"/>
    <lineage>
        <taxon>Eukaryota</taxon>
        <taxon>Viridiplantae</taxon>
        <taxon>Streptophyta</taxon>
        <taxon>Embryophyta</taxon>
        <taxon>Tracheophyta</taxon>
        <taxon>Spermatophyta</taxon>
        <taxon>Magnoliopsida</taxon>
        <taxon>eudicotyledons</taxon>
        <taxon>Gunneridae</taxon>
        <taxon>Pentapetalae</taxon>
        <taxon>rosids</taxon>
        <taxon>malvids</taxon>
        <taxon>Brassicales</taxon>
        <taxon>Brassicaceae</taxon>
        <taxon>Camelineae</taxon>
        <taxon>Arabidopsis</taxon>
    </lineage>
</organism>